<comment type="function">
    <text evidence="1">Involved in the binding of tRNA to the ribosomes.</text>
</comment>
<comment type="subunit">
    <text evidence="1">Part of the 30S ribosomal subunit.</text>
</comment>
<comment type="similarity">
    <text evidence="1">Belongs to the universal ribosomal protein uS10 family.</text>
</comment>
<reference key="1">
    <citation type="submission" date="2007-05" db="EMBL/GenBank/DDBJ databases">
        <title>Complete sequence of Thermotoga petrophila RKU-1.</title>
        <authorList>
            <consortium name="US DOE Joint Genome Institute"/>
            <person name="Copeland A."/>
            <person name="Lucas S."/>
            <person name="Lapidus A."/>
            <person name="Barry K."/>
            <person name="Glavina del Rio T."/>
            <person name="Dalin E."/>
            <person name="Tice H."/>
            <person name="Pitluck S."/>
            <person name="Sims D."/>
            <person name="Brettin T."/>
            <person name="Bruce D."/>
            <person name="Detter J.C."/>
            <person name="Han C."/>
            <person name="Tapia R."/>
            <person name="Schmutz J."/>
            <person name="Larimer F."/>
            <person name="Land M."/>
            <person name="Hauser L."/>
            <person name="Kyrpides N."/>
            <person name="Mikhailova N."/>
            <person name="Nelson K."/>
            <person name="Gogarten J.P."/>
            <person name="Noll K."/>
            <person name="Richardson P."/>
        </authorList>
    </citation>
    <scope>NUCLEOTIDE SEQUENCE [LARGE SCALE GENOMIC DNA]</scope>
    <source>
        <strain>ATCC BAA-488 / DSM 13995 / JCM 10881 / RKU-1</strain>
    </source>
</reference>
<dbReference type="EMBL" id="CP000702">
    <property type="protein sequence ID" value="ABQ47305.1"/>
    <property type="molecule type" value="Genomic_DNA"/>
</dbReference>
<dbReference type="RefSeq" id="WP_004081837.1">
    <property type="nucleotide sequence ID" value="NC_009486.1"/>
</dbReference>
<dbReference type="SMR" id="A5IM82"/>
<dbReference type="STRING" id="390874.Tpet_1291"/>
<dbReference type="KEGG" id="tpt:Tpet_1291"/>
<dbReference type="eggNOG" id="COG0051">
    <property type="taxonomic scope" value="Bacteria"/>
</dbReference>
<dbReference type="HOGENOM" id="CLU_122625_1_3_0"/>
<dbReference type="Proteomes" id="UP000006558">
    <property type="component" value="Chromosome"/>
</dbReference>
<dbReference type="GO" id="GO:1990904">
    <property type="term" value="C:ribonucleoprotein complex"/>
    <property type="evidence" value="ECO:0007669"/>
    <property type="project" value="UniProtKB-KW"/>
</dbReference>
<dbReference type="GO" id="GO:0005840">
    <property type="term" value="C:ribosome"/>
    <property type="evidence" value="ECO:0007669"/>
    <property type="project" value="UniProtKB-KW"/>
</dbReference>
<dbReference type="GO" id="GO:0003735">
    <property type="term" value="F:structural constituent of ribosome"/>
    <property type="evidence" value="ECO:0007669"/>
    <property type="project" value="InterPro"/>
</dbReference>
<dbReference type="GO" id="GO:0000049">
    <property type="term" value="F:tRNA binding"/>
    <property type="evidence" value="ECO:0007669"/>
    <property type="project" value="UniProtKB-UniRule"/>
</dbReference>
<dbReference type="GO" id="GO:0006412">
    <property type="term" value="P:translation"/>
    <property type="evidence" value="ECO:0007669"/>
    <property type="project" value="UniProtKB-UniRule"/>
</dbReference>
<dbReference type="FunFam" id="3.30.70.600:FF:000001">
    <property type="entry name" value="30S ribosomal protein S10"/>
    <property type="match status" value="1"/>
</dbReference>
<dbReference type="Gene3D" id="3.30.70.600">
    <property type="entry name" value="Ribosomal protein S10 domain"/>
    <property type="match status" value="1"/>
</dbReference>
<dbReference type="HAMAP" id="MF_00508">
    <property type="entry name" value="Ribosomal_uS10"/>
    <property type="match status" value="1"/>
</dbReference>
<dbReference type="InterPro" id="IPR001848">
    <property type="entry name" value="Ribosomal_uS10"/>
</dbReference>
<dbReference type="InterPro" id="IPR018268">
    <property type="entry name" value="Ribosomal_uS10_CS"/>
</dbReference>
<dbReference type="InterPro" id="IPR027486">
    <property type="entry name" value="Ribosomal_uS10_dom"/>
</dbReference>
<dbReference type="InterPro" id="IPR036838">
    <property type="entry name" value="Ribosomal_uS10_dom_sf"/>
</dbReference>
<dbReference type="NCBIfam" id="NF001861">
    <property type="entry name" value="PRK00596.1"/>
    <property type="match status" value="1"/>
</dbReference>
<dbReference type="NCBIfam" id="TIGR01049">
    <property type="entry name" value="rpsJ_bact"/>
    <property type="match status" value="1"/>
</dbReference>
<dbReference type="PANTHER" id="PTHR11700">
    <property type="entry name" value="30S RIBOSOMAL PROTEIN S10 FAMILY MEMBER"/>
    <property type="match status" value="1"/>
</dbReference>
<dbReference type="Pfam" id="PF00338">
    <property type="entry name" value="Ribosomal_S10"/>
    <property type="match status" value="1"/>
</dbReference>
<dbReference type="PRINTS" id="PR00971">
    <property type="entry name" value="RIBOSOMALS10"/>
</dbReference>
<dbReference type="SMART" id="SM01403">
    <property type="entry name" value="Ribosomal_S10"/>
    <property type="match status" value="1"/>
</dbReference>
<dbReference type="SUPFAM" id="SSF54999">
    <property type="entry name" value="Ribosomal protein S10"/>
    <property type="match status" value="1"/>
</dbReference>
<dbReference type="PROSITE" id="PS00361">
    <property type="entry name" value="RIBOSOMAL_S10"/>
    <property type="match status" value="1"/>
</dbReference>
<sequence length="102" mass="11637">MPGQKIRIKLKAYDHELLDESAKKIVEVAKSTNSKVSGPIPLPTERTLYCVLRSPMKHKDSREHFEKRVHKRLIDIIDPSPKTIDALMRINLPAGVDVEIKL</sequence>
<name>RS10_THEP1</name>
<evidence type="ECO:0000255" key="1">
    <source>
        <dbReference type="HAMAP-Rule" id="MF_00508"/>
    </source>
</evidence>
<evidence type="ECO:0000305" key="2"/>
<keyword id="KW-0687">Ribonucleoprotein</keyword>
<keyword id="KW-0689">Ribosomal protein</keyword>
<protein>
    <recommendedName>
        <fullName evidence="1">Small ribosomal subunit protein uS10</fullName>
    </recommendedName>
    <alternativeName>
        <fullName evidence="2">30S ribosomal protein S10</fullName>
    </alternativeName>
</protein>
<accession>A5IM82</accession>
<feature type="chain" id="PRO_1000015131" description="Small ribosomal subunit protein uS10">
    <location>
        <begin position="1"/>
        <end position="102"/>
    </location>
</feature>
<gene>
    <name evidence="1" type="primary">rpsJ</name>
    <name type="ordered locus">Tpet_1291</name>
</gene>
<organism>
    <name type="scientific">Thermotoga petrophila (strain ATCC BAA-488 / DSM 13995 / JCM 10881 / RKU-1)</name>
    <dbReference type="NCBI Taxonomy" id="390874"/>
    <lineage>
        <taxon>Bacteria</taxon>
        <taxon>Thermotogati</taxon>
        <taxon>Thermotogota</taxon>
        <taxon>Thermotogae</taxon>
        <taxon>Thermotogales</taxon>
        <taxon>Thermotogaceae</taxon>
        <taxon>Thermotoga</taxon>
    </lineage>
</organism>
<proteinExistence type="inferred from homology"/>